<reference key="1">
    <citation type="journal article" date="1998" name="Science">
        <title>Genome sequence of the nematode C. elegans: a platform for investigating biology.</title>
        <authorList>
            <consortium name="The C. elegans sequencing consortium"/>
        </authorList>
    </citation>
    <scope>NUCLEOTIDE SEQUENCE [LARGE SCALE GENOMIC DNA]</scope>
    <source>
        <strain>Bristol N2</strain>
    </source>
</reference>
<reference key="2">
    <citation type="journal article" date="2007" name="PLoS Biol.">
        <title>High-throughput in vivo analysis of gene expression in Caenorhabditis elegans.</title>
        <authorList>
            <person name="Hunt-Newbury R."/>
            <person name="Viveiros R."/>
            <person name="Johnsen R."/>
            <person name="Mah A."/>
            <person name="Anastas D."/>
            <person name="Fang L."/>
            <person name="Halfnight E."/>
            <person name="Lee D."/>
            <person name="Lin J."/>
            <person name="Lorch A."/>
            <person name="McKay S."/>
            <person name="Okada H.M."/>
            <person name="Pan J."/>
            <person name="Schulz A.K."/>
            <person name="Tu D."/>
            <person name="Wong K."/>
            <person name="Zhao Z."/>
            <person name="Alexeyenko A."/>
            <person name="Burglin T."/>
            <person name="Sonnhammer E."/>
            <person name="Schnabel R."/>
            <person name="Jones S.J."/>
            <person name="Marra M.A."/>
            <person name="Baillie D.L."/>
            <person name="Moerman D.G."/>
        </authorList>
    </citation>
    <scope>TISSUE SPECIFICITY</scope>
</reference>
<reference key="3">
    <citation type="journal article" date="2012" name="Mech. Dev.">
        <title>CCDC-55 is required for larval development and distal tip cell migration in Caenorhabditis elegans.</title>
        <authorList>
            <person name="Kovacevic I."/>
            <person name="Ho R."/>
            <person name="Cram E.J."/>
        </authorList>
    </citation>
    <scope>FUNCTION</scope>
    <scope>SUBCELLULAR LOCATION</scope>
    <scope>TISSUE SPECIFICITY</scope>
    <scope>DISRUPTION PHENOTYPE</scope>
</reference>
<gene>
    <name type="primary">ccdc-55</name>
    <name type="ORF">C16C10.6</name>
</gene>
<evidence type="ECO:0000255" key="1"/>
<evidence type="ECO:0000256" key="2">
    <source>
        <dbReference type="SAM" id="MobiDB-lite"/>
    </source>
</evidence>
<evidence type="ECO:0000269" key="3">
    <source>
    </source>
</evidence>
<evidence type="ECO:0000269" key="4">
    <source>
    </source>
</evidence>
<evidence type="ECO:0000305" key="5"/>
<feature type="chain" id="PRO_0000065181" description="Nuclear speckle splicing regulatory protein 1 homolog">
    <location>
        <begin position="1"/>
        <end position="392"/>
    </location>
</feature>
<feature type="region of interest" description="Disordered" evidence="2">
    <location>
        <begin position="1"/>
        <end position="73"/>
    </location>
</feature>
<feature type="region of interest" description="Disordered" evidence="2">
    <location>
        <begin position="113"/>
        <end position="169"/>
    </location>
</feature>
<feature type="region of interest" description="Disordered" evidence="2">
    <location>
        <begin position="187"/>
        <end position="357"/>
    </location>
</feature>
<feature type="coiled-coil region" evidence="1">
    <location>
        <begin position="76"/>
        <end position="132"/>
    </location>
</feature>
<feature type="compositionally biased region" description="Basic and acidic residues" evidence="2">
    <location>
        <begin position="54"/>
        <end position="65"/>
    </location>
</feature>
<feature type="compositionally biased region" description="Basic and acidic residues" evidence="2">
    <location>
        <begin position="113"/>
        <end position="132"/>
    </location>
</feature>
<feature type="compositionally biased region" description="Basic and acidic residues" evidence="2">
    <location>
        <begin position="149"/>
        <end position="160"/>
    </location>
</feature>
<feature type="compositionally biased region" description="Basic and acidic residues" evidence="2">
    <location>
        <begin position="205"/>
        <end position="238"/>
    </location>
</feature>
<feature type="compositionally biased region" description="Basic and acidic residues" evidence="2">
    <location>
        <begin position="313"/>
        <end position="357"/>
    </location>
</feature>
<sequence length="392" mass="45100">MASKRHVGLNIRKKDEPKAAPIRVSSVFGDDDDDDNVPATATNMASASVIRVQKAAEREHQKAEAEDPTIFDYDGNYDEIQAIKNEKKEEARKADKNRESKYAENIIKAHARRQLEQFSREERQQLREREKEGDEFDDKEVFVTGAYRKQQEEVKKHREQEAEEAAFNDMTSVQKQKLWEIGMGRTLLNDLARDPTAIKQRKKEQKNVRKREDSDEEIDPKPEKSDKKPAEKLKKSIYSDDSDEEKAPKPPQKNFEGDLKPGLNTVSKKKATTHAERIRQRNYTPTPPSSDDEGARAPRARRRTSSPSPTSRKSIESRESGSRRSPEGKSEKSEKAPKISLKDKLKPKKIDKEARLDGLKEILKQRNTEEDIEAARQRYFERKEQGIVVPPL</sequence>
<proteinExistence type="evidence at transcript level"/>
<comment type="function">
    <text evidence="4">Required for the cessation of distal tip cell migration at the end of larval morphogenesis.</text>
</comment>
<comment type="subcellular location">
    <subcellularLocation>
        <location evidence="4">Cytoplasm</location>
    </subcellularLocation>
    <subcellularLocation>
        <location evidence="4">Nucleus</location>
    </subcellularLocation>
    <text evidence="4">Predominantly nuclear localization in the distal tip cell.</text>
</comment>
<comment type="tissue specificity">
    <text evidence="3 4">Expressed in the intestine, nervous system and head neurons in both larvae and adults (PubMed:17850180). Expressed in the distal tip cell (PubMed:22285439).</text>
</comment>
<comment type="disruption phenotype">
    <text evidence="4">Early larval arrest, continued gonad expansion and shortened lifespan. RNAi-mediated knockdown results in continuous distal tip cell migration past the midline during adulthood. In a rnf-5(tm794) mutant background, increased severity of the distal tip cell migration defects.</text>
</comment>
<comment type="similarity">
    <text evidence="5">Belongs to the NSRP1 family.</text>
</comment>
<accession>Q09252</accession>
<organism>
    <name type="scientific">Caenorhabditis elegans</name>
    <dbReference type="NCBI Taxonomy" id="6239"/>
    <lineage>
        <taxon>Eukaryota</taxon>
        <taxon>Metazoa</taxon>
        <taxon>Ecdysozoa</taxon>
        <taxon>Nematoda</taxon>
        <taxon>Chromadorea</taxon>
        <taxon>Rhabditida</taxon>
        <taxon>Rhabditina</taxon>
        <taxon>Rhabditomorpha</taxon>
        <taxon>Rhabditoidea</taxon>
        <taxon>Rhabditidae</taxon>
        <taxon>Peloderinae</taxon>
        <taxon>Caenorhabditis</taxon>
    </lineage>
</organism>
<name>NSRP1_CAEEL</name>
<keyword id="KW-0175">Coiled coil</keyword>
<keyword id="KW-0963">Cytoplasm</keyword>
<keyword id="KW-0539">Nucleus</keyword>
<keyword id="KW-1185">Reference proteome</keyword>
<dbReference type="EMBL" id="Z46787">
    <property type="protein sequence ID" value="CAA86744.1"/>
    <property type="molecule type" value="Genomic_DNA"/>
</dbReference>
<dbReference type="PIR" id="T19327">
    <property type="entry name" value="T19327"/>
</dbReference>
<dbReference type="RefSeq" id="NP_497831.1">
    <property type="nucleotide sequence ID" value="NM_065430.5"/>
</dbReference>
<dbReference type="BioGRID" id="40770">
    <property type="interactions" value="14"/>
</dbReference>
<dbReference type="FunCoup" id="Q09252">
    <property type="interactions" value="812"/>
</dbReference>
<dbReference type="IntAct" id="Q09252">
    <property type="interactions" value="1"/>
</dbReference>
<dbReference type="STRING" id="6239.C16C10.6.1"/>
<dbReference type="iPTMnet" id="Q09252"/>
<dbReference type="PaxDb" id="6239-C16C10.6"/>
<dbReference type="PeptideAtlas" id="Q09252"/>
<dbReference type="EnsemblMetazoa" id="C16C10.6.1">
    <property type="protein sequence ID" value="C16C10.6.1"/>
    <property type="gene ID" value="WBGene00007627"/>
</dbReference>
<dbReference type="GeneID" id="175533"/>
<dbReference type="KEGG" id="cel:CELE_C16C10.6"/>
<dbReference type="AGR" id="WB:WBGene00007627"/>
<dbReference type="CTD" id="175533"/>
<dbReference type="WormBase" id="C16C10.6">
    <property type="protein sequence ID" value="CE01497"/>
    <property type="gene ID" value="WBGene00007627"/>
    <property type="gene designation" value="ccdc-55"/>
</dbReference>
<dbReference type="eggNOG" id="KOG2117">
    <property type="taxonomic scope" value="Eukaryota"/>
</dbReference>
<dbReference type="GeneTree" id="ENSGT00940000154049"/>
<dbReference type="HOGENOM" id="CLU_772145_0_0_1"/>
<dbReference type="InParanoid" id="Q09252"/>
<dbReference type="OMA" id="MSKPLAF"/>
<dbReference type="OrthoDB" id="446635at2759"/>
<dbReference type="PhylomeDB" id="Q09252"/>
<dbReference type="Reactome" id="R-CEL-72163">
    <property type="pathway name" value="mRNA Splicing - Major Pathway"/>
</dbReference>
<dbReference type="PRO" id="PR:Q09252"/>
<dbReference type="Proteomes" id="UP000001940">
    <property type="component" value="Chromosome III"/>
</dbReference>
<dbReference type="Bgee" id="WBGene00007627">
    <property type="expression patterns" value="Expressed in adult organism and 4 other cell types or tissues"/>
</dbReference>
<dbReference type="GO" id="GO:0005737">
    <property type="term" value="C:cytoplasm"/>
    <property type="evidence" value="ECO:0000314"/>
    <property type="project" value="WormBase"/>
</dbReference>
<dbReference type="GO" id="GO:0005634">
    <property type="term" value="C:nucleus"/>
    <property type="evidence" value="ECO:0000314"/>
    <property type="project" value="WormBase"/>
</dbReference>
<dbReference type="GO" id="GO:0003729">
    <property type="term" value="F:mRNA binding"/>
    <property type="evidence" value="ECO:0000250"/>
    <property type="project" value="WormBase"/>
</dbReference>
<dbReference type="GO" id="GO:0040039">
    <property type="term" value="P:inductive cell migration"/>
    <property type="evidence" value="ECO:0000315"/>
    <property type="project" value="WormBase"/>
</dbReference>
<dbReference type="GO" id="GO:0002119">
    <property type="term" value="P:nematode larval development"/>
    <property type="evidence" value="ECO:0000315"/>
    <property type="project" value="WormBase"/>
</dbReference>
<dbReference type="GO" id="GO:0000381">
    <property type="term" value="P:regulation of alternative mRNA splicing, via spliceosome"/>
    <property type="evidence" value="ECO:0007669"/>
    <property type="project" value="InterPro"/>
</dbReference>
<dbReference type="InterPro" id="IPR042816">
    <property type="entry name" value="Nsrp1"/>
</dbReference>
<dbReference type="InterPro" id="IPR018612">
    <property type="entry name" value="NSRP1_N"/>
</dbReference>
<dbReference type="PANTHER" id="PTHR31938">
    <property type="entry name" value="NUCLEAR SPECKLE SPLICING REGULATORY PROTEIN 1"/>
    <property type="match status" value="1"/>
</dbReference>
<dbReference type="PANTHER" id="PTHR31938:SF4">
    <property type="entry name" value="NUCLEAR SPECKLE SPLICING REGULATORY PROTEIN 1"/>
    <property type="match status" value="1"/>
</dbReference>
<dbReference type="Pfam" id="PF09745">
    <property type="entry name" value="NSRP1_N"/>
    <property type="match status" value="1"/>
</dbReference>
<protein>
    <recommendedName>
        <fullName>Nuclear speckle splicing regulatory protein 1 homolog</fullName>
    </recommendedName>
    <alternativeName>
        <fullName>Coiled-coil domain-containing protein 55 homolog</fullName>
    </alternativeName>
</protein>